<comment type="caution">
    <text evidence="2">Product of a dubious gene prediction.</text>
</comment>
<gene>
    <name evidence="3" type="primary">COL25A1-DT</name>
    <name type="synonym">ZCCHC23</name>
</gene>
<name>COLDT_HUMAN</name>
<protein>
    <recommendedName>
        <fullName>Putative uncharacterized protein COL25A1-DT</fullName>
    </recommendedName>
    <alternativeName>
        <fullName evidence="3">COL25A1 divergent transcript</fullName>
    </alternativeName>
    <alternativeName>
        <fullName>Zinc finger CCHC domain-containing protein 23</fullName>
    </alternativeName>
</protein>
<organism>
    <name type="scientific">Homo sapiens</name>
    <name type="common">Human</name>
    <dbReference type="NCBI Taxonomy" id="9606"/>
    <lineage>
        <taxon>Eukaryota</taxon>
        <taxon>Metazoa</taxon>
        <taxon>Chordata</taxon>
        <taxon>Craniata</taxon>
        <taxon>Vertebrata</taxon>
        <taxon>Euteleostomi</taxon>
        <taxon>Mammalia</taxon>
        <taxon>Eutheria</taxon>
        <taxon>Euarchontoglires</taxon>
        <taxon>Primates</taxon>
        <taxon>Haplorrhini</taxon>
        <taxon>Catarrhini</taxon>
        <taxon>Hominidae</taxon>
        <taxon>Homo</taxon>
    </lineage>
</organism>
<reference key="1">
    <citation type="journal article" date="2004" name="Nat. Genet.">
        <title>Complete sequencing and characterization of 21,243 full-length human cDNAs.</title>
        <authorList>
            <person name="Ota T."/>
            <person name="Suzuki Y."/>
            <person name="Nishikawa T."/>
            <person name="Otsuki T."/>
            <person name="Sugiyama T."/>
            <person name="Irie R."/>
            <person name="Wakamatsu A."/>
            <person name="Hayashi K."/>
            <person name="Sato H."/>
            <person name="Nagai K."/>
            <person name="Kimura K."/>
            <person name="Makita H."/>
            <person name="Sekine M."/>
            <person name="Obayashi M."/>
            <person name="Nishi T."/>
            <person name="Shibahara T."/>
            <person name="Tanaka T."/>
            <person name="Ishii S."/>
            <person name="Yamamoto J."/>
            <person name="Saito K."/>
            <person name="Kawai Y."/>
            <person name="Isono Y."/>
            <person name="Nakamura Y."/>
            <person name="Nagahari K."/>
            <person name="Murakami K."/>
            <person name="Yasuda T."/>
            <person name="Iwayanagi T."/>
            <person name="Wagatsuma M."/>
            <person name="Shiratori A."/>
            <person name="Sudo H."/>
            <person name="Hosoiri T."/>
            <person name="Kaku Y."/>
            <person name="Kodaira H."/>
            <person name="Kondo H."/>
            <person name="Sugawara M."/>
            <person name="Takahashi M."/>
            <person name="Kanda K."/>
            <person name="Yokoi T."/>
            <person name="Furuya T."/>
            <person name="Kikkawa E."/>
            <person name="Omura Y."/>
            <person name="Abe K."/>
            <person name="Kamihara K."/>
            <person name="Katsuta N."/>
            <person name="Sato K."/>
            <person name="Tanikawa M."/>
            <person name="Yamazaki M."/>
            <person name="Ninomiya K."/>
            <person name="Ishibashi T."/>
            <person name="Yamashita H."/>
            <person name="Murakawa K."/>
            <person name="Fujimori K."/>
            <person name="Tanai H."/>
            <person name="Kimata M."/>
            <person name="Watanabe M."/>
            <person name="Hiraoka S."/>
            <person name="Chiba Y."/>
            <person name="Ishida S."/>
            <person name="Ono Y."/>
            <person name="Takiguchi S."/>
            <person name="Watanabe S."/>
            <person name="Yosida M."/>
            <person name="Hotuta T."/>
            <person name="Kusano J."/>
            <person name="Kanehori K."/>
            <person name="Takahashi-Fujii A."/>
            <person name="Hara H."/>
            <person name="Tanase T.-O."/>
            <person name="Nomura Y."/>
            <person name="Togiya S."/>
            <person name="Komai F."/>
            <person name="Hara R."/>
            <person name="Takeuchi K."/>
            <person name="Arita M."/>
            <person name="Imose N."/>
            <person name="Musashino K."/>
            <person name="Yuuki H."/>
            <person name="Oshima A."/>
            <person name="Sasaki N."/>
            <person name="Aotsuka S."/>
            <person name="Yoshikawa Y."/>
            <person name="Matsunawa H."/>
            <person name="Ichihara T."/>
            <person name="Shiohata N."/>
            <person name="Sano S."/>
            <person name="Moriya S."/>
            <person name="Momiyama H."/>
            <person name="Satoh N."/>
            <person name="Takami S."/>
            <person name="Terashima Y."/>
            <person name="Suzuki O."/>
            <person name="Nakagawa S."/>
            <person name="Senoh A."/>
            <person name="Mizoguchi H."/>
            <person name="Goto Y."/>
            <person name="Shimizu F."/>
            <person name="Wakebe H."/>
            <person name="Hishigaki H."/>
            <person name="Watanabe T."/>
            <person name="Sugiyama A."/>
            <person name="Takemoto M."/>
            <person name="Kawakami B."/>
            <person name="Yamazaki M."/>
            <person name="Watanabe K."/>
            <person name="Kumagai A."/>
            <person name="Itakura S."/>
            <person name="Fukuzumi Y."/>
            <person name="Fujimori Y."/>
            <person name="Komiyama M."/>
            <person name="Tashiro H."/>
            <person name="Tanigami A."/>
            <person name="Fujiwara T."/>
            <person name="Ono T."/>
            <person name="Yamada K."/>
            <person name="Fujii Y."/>
            <person name="Ozaki K."/>
            <person name="Hirao M."/>
            <person name="Ohmori Y."/>
            <person name="Kawabata A."/>
            <person name="Hikiji T."/>
            <person name="Kobatake N."/>
            <person name="Inagaki H."/>
            <person name="Ikema Y."/>
            <person name="Okamoto S."/>
            <person name="Okitani R."/>
            <person name="Kawakami T."/>
            <person name="Noguchi S."/>
            <person name="Itoh T."/>
            <person name="Shigeta K."/>
            <person name="Senba T."/>
            <person name="Matsumura K."/>
            <person name="Nakajima Y."/>
            <person name="Mizuno T."/>
            <person name="Morinaga M."/>
            <person name="Sasaki M."/>
            <person name="Togashi T."/>
            <person name="Oyama M."/>
            <person name="Hata H."/>
            <person name="Watanabe M."/>
            <person name="Komatsu T."/>
            <person name="Mizushima-Sugano J."/>
            <person name="Satoh T."/>
            <person name="Shirai Y."/>
            <person name="Takahashi Y."/>
            <person name="Nakagawa K."/>
            <person name="Okumura K."/>
            <person name="Nagase T."/>
            <person name="Nomura N."/>
            <person name="Kikuchi H."/>
            <person name="Masuho Y."/>
            <person name="Yamashita R."/>
            <person name="Nakai K."/>
            <person name="Yada T."/>
            <person name="Nakamura Y."/>
            <person name="Ohara O."/>
            <person name="Isogai T."/>
            <person name="Sugano S."/>
        </authorList>
    </citation>
    <scope>NUCLEOTIDE SEQUENCE [LARGE SCALE MRNA]</scope>
    <source>
        <tissue>Caudate nucleus</tissue>
    </source>
</reference>
<feature type="chain" id="PRO_0000304552" description="Putative uncharacterized protein COL25A1-DT">
    <location>
        <begin position="1"/>
        <end position="131"/>
    </location>
</feature>
<feature type="zinc finger region" description="CCHC-type; degenerate" evidence="1">
    <location>
        <begin position="64"/>
        <end position="81"/>
    </location>
</feature>
<evidence type="ECO:0000255" key="1">
    <source>
        <dbReference type="PROSITE-ProRule" id="PRU00047"/>
    </source>
</evidence>
<evidence type="ECO:0000305" key="2"/>
<evidence type="ECO:0000312" key="3">
    <source>
        <dbReference type="HGNC" id="HGNC:32963"/>
    </source>
</evidence>
<dbReference type="EMBL" id="AK127166">
    <property type="status" value="NOT_ANNOTATED_CDS"/>
    <property type="molecule type" value="mRNA"/>
</dbReference>
<dbReference type="SMR" id="Q6ZST2"/>
<dbReference type="BioMuta" id="HGNC:32963"/>
<dbReference type="DMDM" id="74723001"/>
<dbReference type="MassIVE" id="Q6ZST2"/>
<dbReference type="AGR" id="HGNC:32963"/>
<dbReference type="GeneCards" id="COL25A1-DT"/>
<dbReference type="HGNC" id="HGNC:32963">
    <property type="gene designation" value="COL25A1-DT"/>
</dbReference>
<dbReference type="neXtProt" id="NX_Q6ZST2"/>
<dbReference type="InParanoid" id="Q6ZST2"/>
<dbReference type="PAN-GO" id="Q6ZST2">
    <property type="GO annotations" value="0 GO annotations based on evolutionary models"/>
</dbReference>
<dbReference type="Pharos" id="Q6ZST2">
    <property type="development level" value="Tdark"/>
</dbReference>
<dbReference type="PRO" id="PR:Q6ZST2"/>
<dbReference type="Proteomes" id="UP000005640">
    <property type="component" value="Unplaced"/>
</dbReference>
<dbReference type="RNAct" id="Q6ZST2">
    <property type="molecule type" value="protein"/>
</dbReference>
<dbReference type="GO" id="GO:0003676">
    <property type="term" value="F:nucleic acid binding"/>
    <property type="evidence" value="ECO:0007669"/>
    <property type="project" value="InterPro"/>
</dbReference>
<dbReference type="GO" id="GO:0008270">
    <property type="term" value="F:zinc ion binding"/>
    <property type="evidence" value="ECO:0007669"/>
    <property type="project" value="UniProtKB-KW"/>
</dbReference>
<dbReference type="Gene3D" id="4.10.60.10">
    <property type="entry name" value="Zinc finger, CCHC-type"/>
    <property type="match status" value="1"/>
</dbReference>
<dbReference type="InterPro" id="IPR001878">
    <property type="entry name" value="Znf_CCHC"/>
</dbReference>
<dbReference type="InterPro" id="IPR036875">
    <property type="entry name" value="Znf_CCHC_sf"/>
</dbReference>
<dbReference type="SUPFAM" id="SSF57756">
    <property type="entry name" value="Retrovirus zinc finger-like domains"/>
    <property type="match status" value="1"/>
</dbReference>
<dbReference type="PROSITE" id="PS50158">
    <property type="entry name" value="ZF_CCHC"/>
    <property type="match status" value="1"/>
</dbReference>
<sequence length="131" mass="14410">MLLLNQTLATTEKQTALQAAEKFVDELCISYSAKKGRGYARKRQKNLLATLQAYKPQNPKDAPVNCDKCGKPGNVKNDCPGSMRKPARPCPICGGDHWRVDCPQRCRSLGPKPVSQVSNRIDGPQGSCPWL</sequence>
<keyword id="KW-0479">Metal-binding</keyword>
<keyword id="KW-1185">Reference proteome</keyword>
<keyword id="KW-0862">Zinc</keyword>
<keyword id="KW-0863">Zinc-finger</keyword>
<proteinExistence type="uncertain"/>
<accession>Q6ZST2</accession>